<feature type="chain" id="PRO_1000193165" description="S-adenosylmethionine decarboxylase beta chain" evidence="1">
    <location>
        <begin position="1"/>
        <end position="62"/>
    </location>
</feature>
<feature type="chain" id="PRO_1000193166" description="S-adenosylmethionine decarboxylase alpha chain" evidence="1">
    <location>
        <begin position="63"/>
        <end position="133"/>
    </location>
</feature>
<feature type="active site" description="Schiff-base intermediate with substrate; via pyruvic acid" evidence="1">
    <location>
        <position position="63"/>
    </location>
</feature>
<feature type="active site" description="Proton acceptor; for processing activity" evidence="1">
    <location>
        <position position="68"/>
    </location>
</feature>
<feature type="active site" description="Proton donor; for catalytic activity" evidence="1">
    <location>
        <position position="83"/>
    </location>
</feature>
<feature type="site" description="Cleavage (non-hydrolytic); by autolysis" evidence="1">
    <location>
        <begin position="62"/>
        <end position="63"/>
    </location>
</feature>
<feature type="modified residue" description="Pyruvic acid (Ser); by autocatalysis" evidence="1">
    <location>
        <position position="63"/>
    </location>
</feature>
<dbReference type="EC" id="4.1.1.50" evidence="1"/>
<dbReference type="EMBL" id="CP001132">
    <property type="protein sequence ID" value="ACH82590.1"/>
    <property type="molecule type" value="Genomic_DNA"/>
</dbReference>
<dbReference type="SMR" id="B5EL74"/>
<dbReference type="KEGG" id="afe:Lferr_0336"/>
<dbReference type="eggNOG" id="COG1586">
    <property type="taxonomic scope" value="Bacteria"/>
</dbReference>
<dbReference type="HOGENOM" id="CLU_125470_2_3_6"/>
<dbReference type="UniPathway" id="UPA00331">
    <property type="reaction ID" value="UER00451"/>
</dbReference>
<dbReference type="GO" id="GO:0005829">
    <property type="term" value="C:cytosol"/>
    <property type="evidence" value="ECO:0007669"/>
    <property type="project" value="TreeGrafter"/>
</dbReference>
<dbReference type="GO" id="GO:0004014">
    <property type="term" value="F:adenosylmethionine decarboxylase activity"/>
    <property type="evidence" value="ECO:0007669"/>
    <property type="project" value="UniProtKB-UniRule"/>
</dbReference>
<dbReference type="GO" id="GO:0008295">
    <property type="term" value="P:spermidine biosynthetic process"/>
    <property type="evidence" value="ECO:0007669"/>
    <property type="project" value="UniProtKB-UniRule"/>
</dbReference>
<dbReference type="Gene3D" id="3.30.160.750">
    <property type="match status" value="1"/>
</dbReference>
<dbReference type="Gene3D" id="3.30.360.110">
    <property type="entry name" value="S-adenosylmethionine decarboxylase domain"/>
    <property type="match status" value="1"/>
</dbReference>
<dbReference type="HAMAP" id="MF_00464">
    <property type="entry name" value="AdoMetDC_1"/>
    <property type="match status" value="1"/>
</dbReference>
<dbReference type="InterPro" id="IPR042286">
    <property type="entry name" value="AdoMetDC_C"/>
</dbReference>
<dbReference type="InterPro" id="IPR003826">
    <property type="entry name" value="AdoMetDC_fam_prok"/>
</dbReference>
<dbReference type="InterPro" id="IPR042284">
    <property type="entry name" value="AdoMetDC_N"/>
</dbReference>
<dbReference type="InterPro" id="IPR016067">
    <property type="entry name" value="S-AdoMet_deCO2ase_core"/>
</dbReference>
<dbReference type="InterPro" id="IPR017716">
    <property type="entry name" value="S-AdoMet_deCOase_pro-enz"/>
</dbReference>
<dbReference type="NCBIfam" id="TIGR03330">
    <property type="entry name" value="SAM_DCase_Bsu"/>
    <property type="match status" value="1"/>
</dbReference>
<dbReference type="PANTHER" id="PTHR33866">
    <property type="entry name" value="S-ADENOSYLMETHIONINE DECARBOXYLASE PROENZYME"/>
    <property type="match status" value="1"/>
</dbReference>
<dbReference type="PANTHER" id="PTHR33866:SF2">
    <property type="entry name" value="S-ADENOSYLMETHIONINE DECARBOXYLASE PROENZYME"/>
    <property type="match status" value="1"/>
</dbReference>
<dbReference type="Pfam" id="PF02675">
    <property type="entry name" value="AdoMet_dc"/>
    <property type="match status" value="1"/>
</dbReference>
<dbReference type="SUPFAM" id="SSF56276">
    <property type="entry name" value="S-adenosylmethionine decarboxylase"/>
    <property type="match status" value="1"/>
</dbReference>
<protein>
    <recommendedName>
        <fullName evidence="1">S-adenosylmethionine decarboxylase proenzyme</fullName>
        <shortName evidence="1">AdoMetDC</shortName>
        <shortName evidence="1">SAMDC</shortName>
        <ecNumber evidence="1">4.1.1.50</ecNumber>
    </recommendedName>
    <component>
        <recommendedName>
            <fullName evidence="1">S-adenosylmethionine decarboxylase beta chain</fullName>
        </recommendedName>
    </component>
    <component>
        <recommendedName>
            <fullName evidence="1">S-adenosylmethionine decarboxylase alpha chain</fullName>
        </recommendedName>
    </component>
</protein>
<sequence length="133" mass="14522">MRSLGHQIVADFYHCDGSTLSDVDFVTDAMLEAARRANCTIVTQTFHHFSPYGVSGAVIVAESHLAIHTWPEYGYAAVDVFTCGDIIQPEDALNYLKEAFGAGQVSTMEMKRGQVDMMGVPAHELRVKPALCA</sequence>
<reference key="1">
    <citation type="submission" date="2008-08" db="EMBL/GenBank/DDBJ databases">
        <title>Complete sequence of Acidithiobacillus ferrooxidans ATCC 53993.</title>
        <authorList>
            <person name="Lucas S."/>
            <person name="Copeland A."/>
            <person name="Lapidus A."/>
            <person name="Glavina del Rio T."/>
            <person name="Dalin E."/>
            <person name="Tice H."/>
            <person name="Bruce D."/>
            <person name="Goodwin L."/>
            <person name="Pitluck S."/>
            <person name="Sims D."/>
            <person name="Brettin T."/>
            <person name="Detter J.C."/>
            <person name="Han C."/>
            <person name="Kuske C.R."/>
            <person name="Larimer F."/>
            <person name="Land M."/>
            <person name="Hauser L."/>
            <person name="Kyrpides N."/>
            <person name="Lykidis A."/>
            <person name="Borole A.P."/>
        </authorList>
    </citation>
    <scope>NUCLEOTIDE SEQUENCE [LARGE SCALE GENOMIC DNA]</scope>
    <source>
        <strain>ATCC 53993 / BNL-5-31</strain>
    </source>
</reference>
<accession>B5EL74</accession>
<comment type="function">
    <text evidence="1">Catalyzes the decarboxylation of S-adenosylmethionine to S-adenosylmethioninamine (dcAdoMet), the propylamine donor required for the synthesis of the polyamines spermine and spermidine from the diamine putrescine.</text>
</comment>
<comment type="catalytic activity">
    <reaction evidence="1">
        <text>S-adenosyl-L-methionine + H(+) = S-adenosyl 3-(methylsulfanyl)propylamine + CO2</text>
        <dbReference type="Rhea" id="RHEA:15981"/>
        <dbReference type="ChEBI" id="CHEBI:15378"/>
        <dbReference type="ChEBI" id="CHEBI:16526"/>
        <dbReference type="ChEBI" id="CHEBI:57443"/>
        <dbReference type="ChEBI" id="CHEBI:59789"/>
        <dbReference type="EC" id="4.1.1.50"/>
    </reaction>
</comment>
<comment type="cofactor">
    <cofactor evidence="1">
        <name>pyruvate</name>
        <dbReference type="ChEBI" id="CHEBI:15361"/>
    </cofactor>
    <text evidence="1">Binds 1 pyruvoyl group covalently per subunit.</text>
</comment>
<comment type="pathway">
    <text evidence="1">Amine and polyamine biosynthesis; S-adenosylmethioninamine biosynthesis; S-adenosylmethioninamine from S-adenosyl-L-methionine: step 1/1.</text>
</comment>
<comment type="subunit">
    <text evidence="1">Heterotetramer of two alpha and two beta chains arranged as a dimer of alpha/beta heterodimers.</text>
</comment>
<comment type="PTM">
    <text evidence="1">Is synthesized initially as an inactive proenzyme. Formation of the active enzyme involves a self-maturation process in which the active site pyruvoyl group is generated from an internal serine residue via an autocatalytic post-translational modification. Two non-identical subunits are generated from the proenzyme in this reaction, and the pyruvate is formed at the N-terminus of the alpha chain, which is derived from the carboxyl end of the proenzyme. The post-translation cleavage follows an unusual pathway, termed non-hydrolytic serinolysis, in which the side chain hydroxyl group of the serine supplies its oxygen atom to form the C-terminus of the beta chain, while the remainder of the serine residue undergoes an oxidative deamination to produce ammonia and the pyruvoyl group blocking the N-terminus of the alpha chain.</text>
</comment>
<comment type="similarity">
    <text evidence="1">Belongs to the prokaryotic AdoMetDC family. Type 1 subfamily.</text>
</comment>
<keyword id="KW-0068">Autocatalytic cleavage</keyword>
<keyword id="KW-0210">Decarboxylase</keyword>
<keyword id="KW-0456">Lyase</keyword>
<keyword id="KW-0620">Polyamine biosynthesis</keyword>
<keyword id="KW-0670">Pyruvate</keyword>
<keyword id="KW-0949">S-adenosyl-L-methionine</keyword>
<keyword id="KW-0704">Schiff base</keyword>
<keyword id="KW-0745">Spermidine biosynthesis</keyword>
<keyword id="KW-0865">Zymogen</keyword>
<evidence type="ECO:0000255" key="1">
    <source>
        <dbReference type="HAMAP-Rule" id="MF_00464"/>
    </source>
</evidence>
<name>SPEH_ACIF5</name>
<proteinExistence type="inferred from homology"/>
<organism>
    <name type="scientific">Acidithiobacillus ferrooxidans (strain ATCC 53993 / BNL-5-31)</name>
    <name type="common">Leptospirillum ferrooxidans (ATCC 53993)</name>
    <dbReference type="NCBI Taxonomy" id="380394"/>
    <lineage>
        <taxon>Bacteria</taxon>
        <taxon>Pseudomonadati</taxon>
        <taxon>Pseudomonadota</taxon>
        <taxon>Acidithiobacillia</taxon>
        <taxon>Acidithiobacillales</taxon>
        <taxon>Acidithiobacillaceae</taxon>
        <taxon>Acidithiobacillus</taxon>
    </lineage>
</organism>
<gene>
    <name evidence="1" type="primary">speH</name>
    <name type="ordered locus">Lferr_0336</name>
</gene>